<keyword id="KW-0143">Chaperone</keyword>
<keyword id="KW-0963">Cytoplasm</keyword>
<comment type="function">
    <text evidence="1">Component of the RavA-ViaA chaperone complex, which may act on the membrane to optimize the function of some of the respiratory chains. ViaA stimulates the ATPase activity of RavA.</text>
</comment>
<comment type="subunit">
    <text evidence="1">Homodimer. Interacts with RavA.</text>
</comment>
<comment type="subcellular location">
    <subcellularLocation>
        <location evidence="1">Cytoplasm</location>
    </subcellularLocation>
</comment>
<comment type="similarity">
    <text evidence="1">Belongs to the ViaA family.</text>
</comment>
<gene>
    <name evidence="1" type="primary">viaA</name>
    <name type="ordered locus">EFER_4044</name>
</gene>
<feature type="chain" id="PRO_1000186154" description="Regulatory protein ViaA">
    <location>
        <begin position="1"/>
        <end position="483"/>
    </location>
</feature>
<dbReference type="EMBL" id="CU928158">
    <property type="protein sequence ID" value="CAQ91478.1"/>
    <property type="molecule type" value="Genomic_DNA"/>
</dbReference>
<dbReference type="RefSeq" id="WP_000956659.1">
    <property type="nucleotide sequence ID" value="NC_011740.1"/>
</dbReference>
<dbReference type="SMR" id="B7LK90"/>
<dbReference type="GeneID" id="75059638"/>
<dbReference type="KEGG" id="efe:EFER_4044"/>
<dbReference type="HOGENOM" id="CLU_022130_0_0_6"/>
<dbReference type="OrthoDB" id="387240at2"/>
<dbReference type="Proteomes" id="UP000000745">
    <property type="component" value="Chromosome"/>
</dbReference>
<dbReference type="GO" id="GO:0005829">
    <property type="term" value="C:cytosol"/>
    <property type="evidence" value="ECO:0007669"/>
    <property type="project" value="TreeGrafter"/>
</dbReference>
<dbReference type="CDD" id="cd01462">
    <property type="entry name" value="VWA_YIEM_type"/>
    <property type="match status" value="1"/>
</dbReference>
<dbReference type="Gene3D" id="3.40.50.410">
    <property type="entry name" value="von Willebrand factor, type A domain"/>
    <property type="match status" value="1"/>
</dbReference>
<dbReference type="HAMAP" id="MF_01626">
    <property type="entry name" value="ViaA"/>
    <property type="match status" value="1"/>
</dbReference>
<dbReference type="InterPro" id="IPR008912">
    <property type="entry name" value="Uncharacterised_CoxE"/>
</dbReference>
<dbReference type="InterPro" id="IPR023481">
    <property type="entry name" value="Uncharacterised_ViaA"/>
</dbReference>
<dbReference type="InterPro" id="IPR002035">
    <property type="entry name" value="VWF_A"/>
</dbReference>
<dbReference type="InterPro" id="IPR036465">
    <property type="entry name" value="vWFA_dom_sf"/>
</dbReference>
<dbReference type="NCBIfam" id="NF008230">
    <property type="entry name" value="PRK10997.1"/>
    <property type="match status" value="1"/>
</dbReference>
<dbReference type="PANTHER" id="PTHR36846">
    <property type="entry name" value="PROTEIN VIAA"/>
    <property type="match status" value="1"/>
</dbReference>
<dbReference type="PANTHER" id="PTHR36846:SF1">
    <property type="entry name" value="PROTEIN VIAA"/>
    <property type="match status" value="1"/>
</dbReference>
<dbReference type="Pfam" id="PF05762">
    <property type="entry name" value="VWA_CoxE"/>
    <property type="match status" value="1"/>
</dbReference>
<dbReference type="SMART" id="SM00327">
    <property type="entry name" value="VWA"/>
    <property type="match status" value="1"/>
</dbReference>
<dbReference type="SUPFAM" id="SSF53300">
    <property type="entry name" value="vWA-like"/>
    <property type="match status" value="1"/>
</dbReference>
<name>VIAA_ESCF3</name>
<evidence type="ECO:0000255" key="1">
    <source>
        <dbReference type="HAMAP-Rule" id="MF_01626"/>
    </source>
</evidence>
<accession>B7LK90</accession>
<organism>
    <name type="scientific">Escherichia fergusonii (strain ATCC 35469 / DSM 13698 / CCUG 18766 / IAM 14443 / JCM 21226 / LMG 7866 / NBRC 102419 / NCTC 12128 / CDC 0568-73)</name>
    <dbReference type="NCBI Taxonomy" id="585054"/>
    <lineage>
        <taxon>Bacteria</taxon>
        <taxon>Pseudomonadati</taxon>
        <taxon>Pseudomonadota</taxon>
        <taxon>Gammaproteobacteria</taxon>
        <taxon>Enterobacterales</taxon>
        <taxon>Enterobacteriaceae</taxon>
        <taxon>Escherichia</taxon>
    </lineage>
</organism>
<proteinExistence type="inferred from homology"/>
<reference key="1">
    <citation type="journal article" date="2009" name="PLoS Genet.">
        <title>Organised genome dynamics in the Escherichia coli species results in highly diverse adaptive paths.</title>
        <authorList>
            <person name="Touchon M."/>
            <person name="Hoede C."/>
            <person name="Tenaillon O."/>
            <person name="Barbe V."/>
            <person name="Baeriswyl S."/>
            <person name="Bidet P."/>
            <person name="Bingen E."/>
            <person name="Bonacorsi S."/>
            <person name="Bouchier C."/>
            <person name="Bouvet O."/>
            <person name="Calteau A."/>
            <person name="Chiapello H."/>
            <person name="Clermont O."/>
            <person name="Cruveiller S."/>
            <person name="Danchin A."/>
            <person name="Diard M."/>
            <person name="Dossat C."/>
            <person name="Karoui M.E."/>
            <person name="Frapy E."/>
            <person name="Garry L."/>
            <person name="Ghigo J.M."/>
            <person name="Gilles A.M."/>
            <person name="Johnson J."/>
            <person name="Le Bouguenec C."/>
            <person name="Lescat M."/>
            <person name="Mangenot S."/>
            <person name="Martinez-Jehanne V."/>
            <person name="Matic I."/>
            <person name="Nassif X."/>
            <person name="Oztas S."/>
            <person name="Petit M.A."/>
            <person name="Pichon C."/>
            <person name="Rouy Z."/>
            <person name="Ruf C.S."/>
            <person name="Schneider D."/>
            <person name="Tourret J."/>
            <person name="Vacherie B."/>
            <person name="Vallenet D."/>
            <person name="Medigue C."/>
            <person name="Rocha E.P.C."/>
            <person name="Denamur E."/>
        </authorList>
    </citation>
    <scope>NUCLEOTIDE SEQUENCE [LARGE SCALE GENOMIC DNA]</scope>
    <source>
        <strain>ATCC 35469 / DSM 13698 / BCRC 15582 / CCUG 18766 / IAM 14443 / JCM 21226 / LMG 7866 / NBRC 102419 / NCTC 12128 / CDC 0568-73</strain>
    </source>
</reference>
<sequence length="483" mass="55788">MLTLDTLNVMLAVSEEGMIEEMILALLSSPVLAVIFEKSPRLKKAITNDLPRWREALRTRLKDVHVPPELTEEVMCYQQSQLLSTPQFIVQLPQILALLYRLHSPYADQAQQLVDGNSRFTPALHTLFLQRWRLSLVVQATTFNQQLLEEEREQLLSEVQERMTLSGQLEPVLVDNDNAAGHLWDMSAGQLKRGDYQLIVKYGDFLAQQPELRQLAEQLGRSREAKSVPRKDAPMEAFRTLVREPATVPEQVEGLHQSDDILRLLPPELATLGISELEYEFYRRLVEKQLLTYRLQGEAWREKITERPVTHQDFEEQPRGPFIVCVDTSGSMGGFNEQCAKAFCLALMRIALADNRRCFIMLFSTEIVSYELSCPQGIEQAIRFLSQRFRGGTDLASCFRTIIERMQGREWFDADAVVISDFIAQRLPDDVVNKVKTLQKEHQHRFHAVAMSAHGKPGIMRIFDHIWRFDTGMRSRLLRRWRR</sequence>
<protein>
    <recommendedName>
        <fullName evidence="1">Regulatory protein ViaA</fullName>
    </recommendedName>
    <alternativeName>
        <fullName evidence="1">VWA interacting with AAA+ ATPase</fullName>
    </alternativeName>
</protein>